<comment type="function">
    <text evidence="2 3">Serine/threonine kinase which acts as an essential component of the MAP kinase signal transduction pathway. Plays an important role in the cascades of cellular responses evoked by changes in the environment. Mediates signal transduction of TRAF6, various cytokines including interleukin-1 (IL-1), transforming growth factor-beta (TGFB), TGFB-related factors like BMP2 and BMP4, toll-like receptors (TLR), tumor necrosis factor receptor CD40 and B-cell receptor (BCR). Once activated, acts as an upstream activator of the MKK/JNK signal transduction cascade and the p38 MAPK signal transduction cascade through the phosphorylation and activation of several MAP kinase kinases like MAP2K1/MEK1, MAP2K3/MKK3, MAP2K6/MKK6 and MAP2K7/MKK7. These MAP2Ks in turn activate p38 MAPKs and c-jun N-terminal kinases (JNKs); both p38 MAPK and JNK pathways control the transcription factors activator protein-1 (AP-1). Independently of MAP2Ks and p38 MAPKs, acts as a key activator of NF-kappa-B by promoting activation of the I-kappa-B-kinase (IKK) core complex. Mechanistically, recruited to polyubiquitin chains of RIPK2 and IKBKG/NEMO via TAB2/MAP3K7IP2 and TAB3/MAP3K7IP3, and catalyzes phosphorylation and activation of IKBKB/IKKB component of the IKK complex, leading to NF-kappa-B activation. In osmotic stress signaling, plays a major role in the activation of MAPK8/JNK1, but not that of NF-kappa-B. Promotes TRIM5 capsid-specific restriction activity. Phosphorylates RIPK1 at 'Ser-321' which positively regulates RIPK1 interaction with RIPK3 to promote necroptosis but negatively regulates RIPK1 kinase activity and its interaction with FADD to mediate apoptosis. Phosphorylates STING1 in response to cGAMP-activation, promoting association between STEEP1 and STING1 and STING1 translocation to COPII vesicles.</text>
</comment>
<comment type="catalytic activity">
    <reaction evidence="2">
        <text>L-seryl-[protein] + ATP = O-phospho-L-seryl-[protein] + ADP + H(+)</text>
        <dbReference type="Rhea" id="RHEA:17989"/>
        <dbReference type="Rhea" id="RHEA-COMP:9863"/>
        <dbReference type="Rhea" id="RHEA-COMP:11604"/>
        <dbReference type="ChEBI" id="CHEBI:15378"/>
        <dbReference type="ChEBI" id="CHEBI:29999"/>
        <dbReference type="ChEBI" id="CHEBI:30616"/>
        <dbReference type="ChEBI" id="CHEBI:83421"/>
        <dbReference type="ChEBI" id="CHEBI:456216"/>
        <dbReference type="EC" id="2.7.11.25"/>
    </reaction>
</comment>
<comment type="catalytic activity">
    <reaction evidence="2">
        <text>L-threonyl-[protein] + ATP = O-phospho-L-threonyl-[protein] + ADP + H(+)</text>
        <dbReference type="Rhea" id="RHEA:46608"/>
        <dbReference type="Rhea" id="RHEA-COMP:11060"/>
        <dbReference type="Rhea" id="RHEA-COMP:11605"/>
        <dbReference type="ChEBI" id="CHEBI:15378"/>
        <dbReference type="ChEBI" id="CHEBI:30013"/>
        <dbReference type="ChEBI" id="CHEBI:30616"/>
        <dbReference type="ChEBI" id="CHEBI:61977"/>
        <dbReference type="ChEBI" id="CHEBI:456216"/>
        <dbReference type="EC" id="2.7.11.25"/>
    </reaction>
</comment>
<comment type="cofactor">
    <cofactor evidence="2">
        <name>Mg(2+)</name>
        <dbReference type="ChEBI" id="CHEBI:18420"/>
    </cofactor>
</comment>
<comment type="activity regulation">
    <text evidence="2">Activated by pro-inflammatory cytokines and in response to physical and chemical stresses, including osmotic stress, oxidative stress, arsenic and ultraviolet light irradiation. Activated by 'Lys-63'-linked polyubiquitination and by autophosphorylation. Association with TAB1/MAP3K7IP1 and TAB2/MAP3K7IP2 promotes activation through autophosphorylation, whereas PPM1B/PP2CB, PP2A and PPP6C dephosphorylation leads to inactivation. Ceramides are also able to activate MAP3K7/TAK1.</text>
</comment>
<comment type="subunit">
    <text evidence="2 3">Can form homodimer. Binds both upstream activators and downstream substrates in multimolecular complexes. Interacts with TAB1/MAP3K7IP1, TAB2/MAP3K7IP2 and TAB3/MAP3K7IP3. Identified in the TRIKA2 complex composed of MAP3K7/TAK1, TAB1/MAP3K7IP1 and TAB2/MAP3K7IP2. Interacts with PPM1L and PPM1B/PP2CB. Interaction with PP2A and PPP6C leads to its repressed activity. Interacts with TRAF6 and TAB1/MAP3K7IP1; during IL-1 signaling. Interacts with TAOK1 and TAOK2; interaction with TAOK2 interferes with MAP3K7 interaction with IKKA, thus preventing NF-kappa-B activation. Interacts with DYNC2I2 (via WD domains). Interacts with CYLD and RBCK1. Interacts with TGFBR1; induces MAP3K7/TAK1 activation by TRAF6. Interacts with MAPK8IP1 and SMAD6. Interacts with isoform 1 of VRK2. Interacts with DAB2; the interaction is induced by TGF-beta stimulation and may mediate TGF-beta stimulated JNK activation. Interacts with TRIM5. Part of a complex containing ITCH, NDFIP1 and MAP3K7. Interacts with IFIT5; the interaction synergizes the recruitment of IKK to MAP3K7 and enhances IKK phosphorylation. Interacts with PLEKHM1 (via N- and C-terminus). Found in a complex with SH3RF1, RAC2, MAP2K7/MKK7, MAPK8IP1/JIP1, MAPK8/JNK1 and MAPK9/JNK2. Interacts with SASH1 (By similarity). Interacts with RIPK1 (By similarity).</text>
</comment>
<comment type="subcellular location">
    <subcellularLocation>
        <location evidence="1">Cytoplasm</location>
    </subcellularLocation>
    <subcellularLocation>
        <location evidence="1">Cell membrane</location>
        <topology evidence="1">Peripheral membrane protein</topology>
        <orientation evidence="1">Cytoplasmic side</orientation>
    </subcellularLocation>
    <text evidence="1">Although the majority of MAP3K7/TAK1 is found in the cytosol, when complexed with TAB1/MAP3K7IP1 and TAB2/MAP3K7IP2, it is also localized at the cell membrane.</text>
</comment>
<comment type="PTM">
    <text evidence="1">Association with TAB1/MAP3K7IP1 promotes autophosphorylation at Ser-192 and subsequent activation. Association with TAB2/MAP3K7IP2, itself associated with free unanchored Lys-63 polyubiquitin chain, promotes autophosphorylation and subsequent activation of MAP3K7. Dephosphorylation at Ser-192 by PPM1B/PP2CB and at Thr-187 by PP2A and PPP6C leads to inactivation (By similarity).</text>
</comment>
<comment type="PTM">
    <text evidence="2 3">'Lys-48'-linked polyubiquitination at Lys-72 is induced by TNFalpha, and leads to proteasomal degradation. Undergoes 'Lys-48'-linked polyubiquitination catalyzed by ITCH. 'Lys-63'-linked polyubiquitination at Lys-158 by TRIM8 does not lead to proteasomal degradation but contributes to autophosphorylation and activation. Deubiquitinated by CYLD, a protease that selectively cleaves 'Lys-63'-linked ubiquitin chains. Deubiquitinated by USP19; leading to negative regulation of TNF-alpha- and IL-1beta-triggered NF-kappa-B activation.</text>
</comment>
<comment type="similarity">
    <text evidence="7">Belongs to the protein kinase superfamily. STE Ser/Thr protein kinase family. MAP kinase kinase kinase subfamily.</text>
</comment>
<protein>
    <recommendedName>
        <fullName>Mitogen-activated protein kinase kinase kinase 7</fullName>
        <ecNumber evidence="2">2.7.11.25</ecNumber>
    </recommendedName>
</protein>
<dbReference type="EC" id="2.7.11.25" evidence="2"/>
<dbReference type="EMBL" id="BC133404">
    <property type="protein sequence ID" value="AAI33405.1"/>
    <property type="molecule type" value="mRNA"/>
</dbReference>
<dbReference type="RefSeq" id="NP_001075064.1">
    <property type="nucleotide sequence ID" value="NM_001081595.1"/>
</dbReference>
<dbReference type="RefSeq" id="XP_005210930.1">
    <property type="nucleotide sequence ID" value="XM_005210873.5"/>
</dbReference>
<dbReference type="SMR" id="A2VDU3"/>
<dbReference type="FunCoup" id="A2VDU3">
    <property type="interactions" value="4920"/>
</dbReference>
<dbReference type="STRING" id="9913.ENSBTAP00000058895"/>
<dbReference type="PaxDb" id="9913-ENSBTAP00000003401"/>
<dbReference type="GeneID" id="529146"/>
<dbReference type="KEGG" id="bta:529146"/>
<dbReference type="CTD" id="6885"/>
<dbReference type="VEuPathDB" id="HostDB:ENSBTAG00000002625"/>
<dbReference type="eggNOG" id="KOG0192">
    <property type="taxonomic scope" value="Eukaryota"/>
</dbReference>
<dbReference type="HOGENOM" id="CLU_000288_7_41_1"/>
<dbReference type="InParanoid" id="A2VDU3"/>
<dbReference type="OMA" id="ARTQCFA"/>
<dbReference type="OrthoDB" id="10261027at2759"/>
<dbReference type="TreeFam" id="TF105116"/>
<dbReference type="Reactome" id="R-BTA-168638">
    <property type="pathway name" value="NOD1/2 Signaling Pathway"/>
</dbReference>
<dbReference type="Reactome" id="R-BTA-202424">
    <property type="pathway name" value="Downstream TCR signaling"/>
</dbReference>
<dbReference type="Reactome" id="R-BTA-2871837">
    <property type="pathway name" value="FCERI mediated NF-kB activation"/>
</dbReference>
<dbReference type="Reactome" id="R-BTA-4086398">
    <property type="pathway name" value="Ca2+ pathway"/>
</dbReference>
<dbReference type="Reactome" id="R-BTA-450302">
    <property type="pathway name" value="activated TAK1 mediates p38 MAPK activation"/>
</dbReference>
<dbReference type="Reactome" id="R-BTA-450321">
    <property type="pathway name" value="JNK (c-Jun kinases) phosphorylation and activation mediated by activated human TAK1"/>
</dbReference>
<dbReference type="Reactome" id="R-BTA-5357956">
    <property type="pathway name" value="TNFR1-induced NF-kappa-B signaling pathway"/>
</dbReference>
<dbReference type="Reactome" id="R-BTA-5607764">
    <property type="pathway name" value="CLEC7A (Dectin-1) signaling"/>
</dbReference>
<dbReference type="Reactome" id="R-BTA-5689880">
    <property type="pathway name" value="Ub-specific processing proteases"/>
</dbReference>
<dbReference type="Reactome" id="R-BTA-9020702">
    <property type="pathway name" value="Interleukin-1 signaling"/>
</dbReference>
<dbReference type="Reactome" id="R-BTA-937042">
    <property type="pathway name" value="IRAK2 mediated activation of TAK1 complex"/>
</dbReference>
<dbReference type="Reactome" id="R-BTA-937072">
    <property type="pathway name" value="TRAF6-mediated induction of TAK1 complex within TLR4 complex"/>
</dbReference>
<dbReference type="Reactome" id="R-BTA-9645460">
    <property type="pathway name" value="Alpha-protein kinase 1 signaling pathway"/>
</dbReference>
<dbReference type="Reactome" id="R-BTA-975163">
    <property type="pathway name" value="IRAK2 mediated activation of TAK1 complex upon TLR7/8 or 9 stimulation"/>
</dbReference>
<dbReference type="Proteomes" id="UP000009136">
    <property type="component" value="Chromosome 9"/>
</dbReference>
<dbReference type="Bgee" id="ENSBTAG00000002625">
    <property type="expression patterns" value="Expressed in thymus and 106 other cell types or tissues"/>
</dbReference>
<dbReference type="GO" id="GO:0005737">
    <property type="term" value="C:cytoplasm"/>
    <property type="evidence" value="ECO:0007669"/>
    <property type="project" value="UniProtKB-SubCell"/>
</dbReference>
<dbReference type="GO" id="GO:0005886">
    <property type="term" value="C:plasma membrane"/>
    <property type="evidence" value="ECO:0007669"/>
    <property type="project" value="UniProtKB-SubCell"/>
</dbReference>
<dbReference type="GO" id="GO:0005524">
    <property type="term" value="F:ATP binding"/>
    <property type="evidence" value="ECO:0007669"/>
    <property type="project" value="UniProtKB-KW"/>
</dbReference>
<dbReference type="GO" id="GO:0019899">
    <property type="term" value="F:enzyme binding"/>
    <property type="evidence" value="ECO:0007669"/>
    <property type="project" value="UniProtKB-ARBA"/>
</dbReference>
<dbReference type="GO" id="GO:0000287">
    <property type="term" value="F:magnesium ion binding"/>
    <property type="evidence" value="ECO:0007669"/>
    <property type="project" value="InterPro"/>
</dbReference>
<dbReference type="GO" id="GO:0004709">
    <property type="term" value="F:MAP kinase kinase kinase activity"/>
    <property type="evidence" value="ECO:0000250"/>
    <property type="project" value="UniProtKB"/>
</dbReference>
<dbReference type="GO" id="GO:0106310">
    <property type="term" value="F:protein serine kinase activity"/>
    <property type="evidence" value="ECO:0007669"/>
    <property type="project" value="RHEA"/>
</dbReference>
<dbReference type="GO" id="GO:0006915">
    <property type="term" value="P:apoptotic process"/>
    <property type="evidence" value="ECO:0007669"/>
    <property type="project" value="UniProtKB-KW"/>
</dbReference>
<dbReference type="GO" id="GO:0007252">
    <property type="term" value="P:I-kappaB phosphorylation"/>
    <property type="evidence" value="ECO:0000250"/>
    <property type="project" value="UniProtKB"/>
</dbReference>
<dbReference type="GO" id="GO:0006955">
    <property type="term" value="P:immune response"/>
    <property type="evidence" value="ECO:0000318"/>
    <property type="project" value="GO_Central"/>
</dbReference>
<dbReference type="GO" id="GO:0007254">
    <property type="term" value="P:JNK cascade"/>
    <property type="evidence" value="ECO:0000250"/>
    <property type="project" value="UniProtKB"/>
</dbReference>
<dbReference type="GO" id="GO:0043123">
    <property type="term" value="P:positive regulation of canonical NF-kappaB signal transduction"/>
    <property type="evidence" value="ECO:0000318"/>
    <property type="project" value="GO_Central"/>
</dbReference>
<dbReference type="GO" id="GO:0043507">
    <property type="term" value="P:positive regulation of JUN kinase activity"/>
    <property type="evidence" value="ECO:0000250"/>
    <property type="project" value="UniProtKB"/>
</dbReference>
<dbReference type="CDD" id="cd14058">
    <property type="entry name" value="STKc_TAK1"/>
    <property type="match status" value="1"/>
</dbReference>
<dbReference type="FunFam" id="1.10.510.10:FF:000143">
    <property type="entry name" value="Mitogen-activated protein kinase kinase kinase 7"/>
    <property type="match status" value="1"/>
</dbReference>
<dbReference type="FunFam" id="3.30.200.20:FF:000152">
    <property type="entry name" value="Mitogen-activated protein kinase kinase kinase 7"/>
    <property type="match status" value="1"/>
</dbReference>
<dbReference type="Gene3D" id="3.30.200.20">
    <property type="entry name" value="Phosphorylase Kinase, domain 1"/>
    <property type="match status" value="1"/>
</dbReference>
<dbReference type="Gene3D" id="1.10.510.10">
    <property type="entry name" value="Transferase(Phosphotransferase) domain 1"/>
    <property type="match status" value="1"/>
</dbReference>
<dbReference type="InterPro" id="IPR011009">
    <property type="entry name" value="Kinase-like_dom_sf"/>
</dbReference>
<dbReference type="InterPro" id="IPR049637">
    <property type="entry name" value="MAP3K7"/>
</dbReference>
<dbReference type="InterPro" id="IPR000719">
    <property type="entry name" value="Prot_kinase_dom"/>
</dbReference>
<dbReference type="InterPro" id="IPR017441">
    <property type="entry name" value="Protein_kinase_ATP_BS"/>
</dbReference>
<dbReference type="InterPro" id="IPR001245">
    <property type="entry name" value="Ser-Thr/Tyr_kinase_cat_dom"/>
</dbReference>
<dbReference type="InterPro" id="IPR008271">
    <property type="entry name" value="Ser/Thr_kinase_AS"/>
</dbReference>
<dbReference type="PANTHER" id="PTHR46716">
    <property type="entry name" value="MITOGEN-ACTIVATED PROTEIN KINASE KINASE KINASE 7"/>
    <property type="match status" value="1"/>
</dbReference>
<dbReference type="PANTHER" id="PTHR46716:SF1">
    <property type="entry name" value="MITOGEN-ACTIVATED PROTEIN KINASE KINASE KINASE 7"/>
    <property type="match status" value="1"/>
</dbReference>
<dbReference type="Pfam" id="PF07714">
    <property type="entry name" value="PK_Tyr_Ser-Thr"/>
    <property type="match status" value="1"/>
</dbReference>
<dbReference type="PIRSF" id="PIRSF038168">
    <property type="entry name" value="MAPKKK7"/>
    <property type="match status" value="1"/>
</dbReference>
<dbReference type="PRINTS" id="PR00109">
    <property type="entry name" value="TYRKINASE"/>
</dbReference>
<dbReference type="SMART" id="SM00220">
    <property type="entry name" value="S_TKc"/>
    <property type="match status" value="1"/>
</dbReference>
<dbReference type="SUPFAM" id="SSF56112">
    <property type="entry name" value="Protein kinase-like (PK-like)"/>
    <property type="match status" value="1"/>
</dbReference>
<dbReference type="PROSITE" id="PS00107">
    <property type="entry name" value="PROTEIN_KINASE_ATP"/>
    <property type="match status" value="1"/>
</dbReference>
<dbReference type="PROSITE" id="PS50011">
    <property type="entry name" value="PROTEIN_KINASE_DOM"/>
    <property type="match status" value="1"/>
</dbReference>
<dbReference type="PROSITE" id="PS00108">
    <property type="entry name" value="PROTEIN_KINASE_ST"/>
    <property type="match status" value="1"/>
</dbReference>
<accession>A2VDU3</accession>
<name>M3K7_BOVIN</name>
<keyword id="KW-0053">Apoptosis</keyword>
<keyword id="KW-0067">ATP-binding</keyword>
<keyword id="KW-1003">Cell membrane</keyword>
<keyword id="KW-0963">Cytoplasm</keyword>
<keyword id="KW-1017">Isopeptide bond</keyword>
<keyword id="KW-0418">Kinase</keyword>
<keyword id="KW-0460">Magnesium</keyword>
<keyword id="KW-0472">Membrane</keyword>
<keyword id="KW-0479">Metal-binding</keyword>
<keyword id="KW-0547">Nucleotide-binding</keyword>
<keyword id="KW-0597">Phosphoprotein</keyword>
<keyword id="KW-1185">Reference proteome</keyword>
<keyword id="KW-0723">Serine/threonine-protein kinase</keyword>
<keyword id="KW-0346">Stress response</keyword>
<keyword id="KW-0804">Transcription</keyword>
<keyword id="KW-0805">Transcription regulation</keyword>
<keyword id="KW-0808">Transferase</keyword>
<keyword id="KW-0832">Ubl conjugation</keyword>
<evidence type="ECO:0000250" key="1"/>
<evidence type="ECO:0000250" key="2">
    <source>
        <dbReference type="UniProtKB" id="O43318"/>
    </source>
</evidence>
<evidence type="ECO:0000250" key="3">
    <source>
        <dbReference type="UniProtKB" id="Q62073"/>
    </source>
</evidence>
<evidence type="ECO:0000255" key="4">
    <source>
        <dbReference type="PROSITE-ProRule" id="PRU00159"/>
    </source>
</evidence>
<evidence type="ECO:0000255" key="5">
    <source>
        <dbReference type="PROSITE-ProRule" id="PRU10027"/>
    </source>
</evidence>
<evidence type="ECO:0000256" key="6">
    <source>
        <dbReference type="SAM" id="MobiDB-lite"/>
    </source>
</evidence>
<evidence type="ECO:0000305" key="7"/>
<sequence length="579" mass="64216">MSTASAASSSSSSSAGEMIEAPSQVLNFEEIDYKEIEVEEVVGRGAFGVVCKAKWRAKDVAIKQIESESERKAFIVELRQLSRVNHPNIVKLYGACLNPVCLVMEYAEGGSLYNVLHGAEPLPYYTAAHAMSWCLQCSQGVAYLHSMQPKALIHRDLKPPNLLLVAGGTVLKICDFGTACDIQTHMTNNKGSAAWMAPEVFEGSNYSEKCDVFSWGIILWEVITRRKPFDEIGGPAFRIMWAVHNGTRPPLIKNLPKPIESLMTRCWSKDPSQRPSMEEIVKIMTHLMRYFPGADEPLQYPCQYSDEGQSNSATSTGSFMDITSTNTSNKSDTNMEQVPATNDTIKRLESKLLKNQAKQQSESGRLSLGASRGSSVESLPPTSEGKRMSADMSEIEARIAATTGNGQPRRRSIQDLTVTGTDPGQVSSRSSSPSVRMITTSGPTSEKPARSHPWTPDDSTDTNGSDNSIPMAYLTLDHQLQPLAPCPNSKESMAVFEQHCKMAQEYMKVQTEIALLLQRKQELVAELDQDEKDQQNTSRLVQEHKKLLDENKSLSTYYQQCKKQLEVIRSQQQKRQGTS</sequence>
<gene>
    <name type="primary">MAP3K7</name>
</gene>
<proteinExistence type="evidence at transcript level"/>
<feature type="chain" id="PRO_0000314284" description="Mitogen-activated protein kinase kinase kinase 7">
    <location>
        <begin position="1"/>
        <end position="579"/>
    </location>
</feature>
<feature type="domain" description="Protein kinase" evidence="4">
    <location>
        <begin position="36"/>
        <end position="291"/>
    </location>
</feature>
<feature type="region of interest" description="Interaction with MAPK8IP1" evidence="1">
    <location>
        <begin position="1"/>
        <end position="300"/>
    </location>
</feature>
<feature type="region of interest" description="Disordered" evidence="6">
    <location>
        <begin position="301"/>
        <end position="339"/>
    </location>
</feature>
<feature type="region of interest" description="Disordered" evidence="6">
    <location>
        <begin position="354"/>
        <end position="391"/>
    </location>
</feature>
<feature type="region of interest" description="Disordered" evidence="6">
    <location>
        <begin position="416"/>
        <end position="466"/>
    </location>
</feature>
<feature type="compositionally biased region" description="Polar residues" evidence="6">
    <location>
        <begin position="306"/>
        <end position="322"/>
    </location>
</feature>
<feature type="compositionally biased region" description="Low complexity" evidence="6">
    <location>
        <begin position="323"/>
        <end position="334"/>
    </location>
</feature>
<feature type="compositionally biased region" description="Low complexity" evidence="6">
    <location>
        <begin position="361"/>
        <end position="375"/>
    </location>
</feature>
<feature type="compositionally biased region" description="Polar residues" evidence="6">
    <location>
        <begin position="416"/>
        <end position="425"/>
    </location>
</feature>
<feature type="compositionally biased region" description="Low complexity" evidence="6">
    <location>
        <begin position="426"/>
        <end position="436"/>
    </location>
</feature>
<feature type="active site" description="Proton acceptor" evidence="4 5">
    <location>
        <position position="156"/>
    </location>
</feature>
<feature type="binding site" evidence="4">
    <location>
        <begin position="42"/>
        <end position="50"/>
    </location>
    <ligand>
        <name>ATP</name>
        <dbReference type="ChEBI" id="CHEBI:30616"/>
    </ligand>
</feature>
<feature type="binding site" evidence="4">
    <location>
        <position position="63"/>
    </location>
    <ligand>
        <name>ATP</name>
        <dbReference type="ChEBI" id="CHEBI:30616"/>
    </ligand>
</feature>
<feature type="modified residue" description="Phosphothreonine; by autocatalysis" evidence="2">
    <location>
        <position position="184"/>
    </location>
</feature>
<feature type="modified residue" description="Phosphothreonine; by autocatalysis" evidence="2">
    <location>
        <position position="187"/>
    </location>
</feature>
<feature type="modified residue" description="Phosphoserine; by autocatalysis" evidence="2">
    <location>
        <position position="192"/>
    </location>
</feature>
<feature type="modified residue" description="Phosphoserine" evidence="2">
    <location>
        <position position="367"/>
    </location>
</feature>
<feature type="modified residue" description="Phosphoserine" evidence="2">
    <location>
        <position position="389"/>
    </location>
</feature>
<feature type="modified residue" description="Phosphoserine" evidence="2">
    <location>
        <position position="412"/>
    </location>
</feature>
<feature type="modified residue" description="Phosphoserine" evidence="2">
    <location>
        <position position="428"/>
    </location>
</feature>
<feature type="cross-link" description="Glycyl lysine isopeptide (Lys-Gly) (interchain with G-Cter in ubiquitin)" evidence="2">
    <location>
        <position position="72"/>
    </location>
</feature>
<feature type="cross-link" description="Glycyl lysine isopeptide (Lys-Gly) (interchain with G-Cter in ubiquitin)" evidence="3">
    <location>
        <position position="158"/>
    </location>
</feature>
<feature type="cross-link" description="Glycyl lysine isopeptide (Lys-Gly) (interchain with G-Cter in ubiquitin)" evidence="3">
    <location>
        <position position="209"/>
    </location>
</feature>
<organism>
    <name type="scientific">Bos taurus</name>
    <name type="common">Bovine</name>
    <dbReference type="NCBI Taxonomy" id="9913"/>
    <lineage>
        <taxon>Eukaryota</taxon>
        <taxon>Metazoa</taxon>
        <taxon>Chordata</taxon>
        <taxon>Craniata</taxon>
        <taxon>Vertebrata</taxon>
        <taxon>Euteleostomi</taxon>
        <taxon>Mammalia</taxon>
        <taxon>Eutheria</taxon>
        <taxon>Laurasiatheria</taxon>
        <taxon>Artiodactyla</taxon>
        <taxon>Ruminantia</taxon>
        <taxon>Pecora</taxon>
        <taxon>Bovidae</taxon>
        <taxon>Bovinae</taxon>
        <taxon>Bos</taxon>
    </lineage>
</organism>
<reference key="1">
    <citation type="submission" date="2007-02" db="EMBL/GenBank/DDBJ databases">
        <authorList>
            <consortium name="NIH - Mammalian Gene Collection (MGC) project"/>
        </authorList>
    </citation>
    <scope>NUCLEOTIDE SEQUENCE [LARGE SCALE MRNA]</scope>
    <source>
        <strain>Hereford</strain>
        <tissue>Ascending colon</tissue>
    </source>
</reference>